<feature type="chain" id="PRO_0000207334" description="Urocanate hydratase">
    <location>
        <begin position="1"/>
        <end position="552"/>
    </location>
</feature>
<feature type="active site" evidence="1">
    <location>
        <position position="407"/>
    </location>
</feature>
<feature type="binding site" evidence="1 3 6">
    <location>
        <begin position="49"/>
        <end position="50"/>
    </location>
    <ligand>
        <name>NAD(+)</name>
        <dbReference type="ChEBI" id="CHEBI:57540"/>
    </ligand>
</feature>
<feature type="binding site" evidence="1 3 6">
    <location>
        <position position="127"/>
    </location>
    <ligand>
        <name>NAD(+)</name>
        <dbReference type="ChEBI" id="CHEBI:57540"/>
    </ligand>
</feature>
<feature type="binding site" evidence="1 3 6">
    <location>
        <begin position="173"/>
        <end position="175"/>
    </location>
    <ligand>
        <name>NAD(+)</name>
        <dbReference type="ChEBI" id="CHEBI:57540"/>
    </ligand>
</feature>
<feature type="binding site" evidence="1 3 6">
    <location>
        <position position="193"/>
    </location>
    <ligand>
        <name>NAD(+)</name>
        <dbReference type="ChEBI" id="CHEBI:57540"/>
    </ligand>
</feature>
<feature type="binding site" evidence="1 3 6">
    <location>
        <position position="198"/>
    </location>
    <ligand>
        <name>NAD(+)</name>
        <dbReference type="ChEBI" id="CHEBI:57540"/>
    </ligand>
</feature>
<feature type="binding site" evidence="1 3 6">
    <location>
        <begin position="239"/>
        <end position="240"/>
    </location>
    <ligand>
        <name>NAD(+)</name>
        <dbReference type="ChEBI" id="CHEBI:57540"/>
    </ligand>
</feature>
<feature type="binding site" evidence="1 3 6">
    <location>
        <begin position="260"/>
        <end position="264"/>
    </location>
    <ligand>
        <name>NAD(+)</name>
        <dbReference type="ChEBI" id="CHEBI:57540"/>
    </ligand>
</feature>
<feature type="binding site" evidence="1 3 6">
    <location>
        <begin position="270"/>
        <end position="271"/>
    </location>
    <ligand>
        <name>NAD(+)</name>
        <dbReference type="ChEBI" id="CHEBI:57540"/>
    </ligand>
</feature>
<feature type="binding site" evidence="1 3 6">
    <location>
        <position position="319"/>
    </location>
    <ligand>
        <name>NAD(+)</name>
        <dbReference type="ChEBI" id="CHEBI:57540"/>
    </ligand>
</feature>
<feature type="binding site" evidence="1 3 6">
    <location>
        <position position="489"/>
    </location>
    <ligand>
        <name>NAD(+)</name>
        <dbReference type="ChEBI" id="CHEBI:57540"/>
    </ligand>
</feature>
<feature type="strand" evidence="7">
    <location>
        <begin position="17"/>
        <end position="20"/>
    </location>
</feature>
<feature type="helix" evidence="7">
    <location>
        <begin position="21"/>
        <end position="33"/>
    </location>
</feature>
<feature type="turn" evidence="7">
    <location>
        <begin position="36"/>
        <end position="38"/>
    </location>
</feature>
<feature type="helix" evidence="7">
    <location>
        <begin position="42"/>
        <end position="44"/>
    </location>
</feature>
<feature type="strand" evidence="7">
    <location>
        <begin position="46"/>
        <end position="48"/>
    </location>
</feature>
<feature type="turn" evidence="7">
    <location>
        <begin position="49"/>
        <end position="51"/>
    </location>
</feature>
<feature type="strand" evidence="7">
    <location>
        <begin position="52"/>
        <end position="57"/>
    </location>
</feature>
<feature type="helix" evidence="7">
    <location>
        <begin position="58"/>
        <end position="70"/>
    </location>
</feature>
<feature type="strand" evidence="7">
    <location>
        <begin position="75"/>
        <end position="80"/>
    </location>
</feature>
<feature type="strand" evidence="7">
    <location>
        <begin position="83"/>
        <end position="89"/>
    </location>
</feature>
<feature type="strand" evidence="7">
    <location>
        <begin position="96"/>
        <end position="102"/>
    </location>
</feature>
<feature type="helix" evidence="7">
    <location>
        <begin position="106"/>
        <end position="108"/>
    </location>
</feature>
<feature type="helix" evidence="7">
    <location>
        <begin position="111"/>
        <end position="119"/>
    </location>
</feature>
<feature type="turn" evidence="7">
    <location>
        <begin position="127"/>
        <end position="133"/>
    </location>
</feature>
<feature type="helix" evidence="7">
    <location>
        <begin position="139"/>
        <end position="156"/>
    </location>
</feature>
<feature type="strand" evidence="7">
    <location>
        <begin position="157"/>
        <end position="159"/>
    </location>
</feature>
<feature type="strand" evidence="7">
    <location>
        <begin position="165"/>
        <end position="169"/>
    </location>
</feature>
<feature type="helix" evidence="7">
    <location>
        <begin position="175"/>
        <end position="177"/>
    </location>
</feature>
<feature type="helix" evidence="7">
    <location>
        <begin position="178"/>
        <end position="184"/>
    </location>
</feature>
<feature type="strand" evidence="7">
    <location>
        <begin position="188"/>
        <end position="194"/>
    </location>
</feature>
<feature type="helix" evidence="7">
    <location>
        <begin position="196"/>
        <end position="204"/>
    </location>
</feature>
<feature type="strand" evidence="7">
    <location>
        <begin position="209"/>
        <end position="213"/>
    </location>
</feature>
<feature type="helix" evidence="7">
    <location>
        <begin position="215"/>
        <end position="227"/>
    </location>
</feature>
<feature type="strand" evidence="7">
    <location>
        <begin position="232"/>
        <end position="238"/>
    </location>
</feature>
<feature type="helix" evidence="7">
    <location>
        <begin position="240"/>
        <end position="248"/>
    </location>
</feature>
<feature type="turn" evidence="7">
    <location>
        <begin position="249"/>
        <end position="251"/>
    </location>
</feature>
<feature type="strand" evidence="7">
    <location>
        <begin position="255"/>
        <end position="257"/>
    </location>
</feature>
<feature type="turn" evidence="7">
    <location>
        <begin position="266"/>
        <end position="269"/>
    </location>
</feature>
<feature type="helix" evidence="7">
    <location>
        <begin position="277"/>
        <end position="286"/>
    </location>
</feature>
<feature type="helix" evidence="7">
    <location>
        <begin position="288"/>
        <end position="312"/>
    </location>
</feature>
<feature type="helix" evidence="7">
    <location>
        <begin position="323"/>
        <end position="329"/>
    </location>
</feature>
<feature type="helix" evidence="7">
    <location>
        <begin position="335"/>
        <end position="337"/>
    </location>
</feature>
<feature type="helix" evidence="7">
    <location>
        <begin position="341"/>
        <end position="344"/>
    </location>
</feature>
<feature type="helix" evidence="7">
    <location>
        <begin position="347"/>
        <end position="350"/>
    </location>
</feature>
<feature type="turn" evidence="7">
    <location>
        <begin position="351"/>
        <end position="353"/>
    </location>
</feature>
<feature type="strand" evidence="7">
    <location>
        <begin position="357"/>
        <end position="361"/>
    </location>
</feature>
<feature type="helix" evidence="7">
    <location>
        <begin position="366"/>
        <end position="379"/>
    </location>
</feature>
<feature type="helix" evidence="7">
    <location>
        <begin position="384"/>
        <end position="396"/>
    </location>
</feature>
<feature type="strand" evidence="7">
    <location>
        <begin position="404"/>
        <end position="406"/>
    </location>
</feature>
<feature type="helix" evidence="7">
    <location>
        <begin position="413"/>
        <end position="427"/>
    </location>
</feature>
<feature type="strand" evidence="7">
    <location>
        <begin position="428"/>
        <end position="432"/>
    </location>
</feature>
<feature type="strand" evidence="7">
    <location>
        <begin position="434"/>
        <end position="438"/>
    </location>
</feature>
<feature type="strand" evidence="7">
    <location>
        <begin position="442"/>
        <end position="447"/>
    </location>
</feature>
<feature type="turn" evidence="7">
    <location>
        <begin position="449"/>
        <end position="455"/>
    </location>
</feature>
<feature type="helix" evidence="7">
    <location>
        <begin position="465"/>
        <end position="477"/>
    </location>
</feature>
<feature type="strand" evidence="7">
    <location>
        <begin position="480"/>
        <end position="487"/>
    </location>
</feature>
<feature type="turn" evidence="7">
    <location>
        <begin position="488"/>
        <end position="490"/>
    </location>
</feature>
<feature type="strand" evidence="7">
    <location>
        <begin position="496"/>
        <end position="504"/>
    </location>
</feature>
<feature type="helix" evidence="7">
    <location>
        <begin position="508"/>
        <end position="532"/>
    </location>
</feature>
<feature type="helix" evidence="7">
    <location>
        <begin position="535"/>
        <end position="543"/>
    </location>
</feature>
<comment type="function">
    <text evidence="1 2">Catalyzes the conversion of urocanate to 4-imidazolone-5-propionate.</text>
</comment>
<comment type="catalytic activity">
    <reaction evidence="1 2">
        <text>4-imidazolone-5-propanoate = trans-urocanate + H2O</text>
        <dbReference type="Rhea" id="RHEA:13101"/>
        <dbReference type="ChEBI" id="CHEBI:15377"/>
        <dbReference type="ChEBI" id="CHEBI:17771"/>
        <dbReference type="ChEBI" id="CHEBI:77893"/>
        <dbReference type="EC" id="4.2.1.49"/>
    </reaction>
</comment>
<comment type="cofactor">
    <cofactor evidence="1 3">
        <name>NAD(+)</name>
        <dbReference type="ChEBI" id="CHEBI:57540"/>
    </cofactor>
    <text evidence="1 3">Binds 1 NAD(+) per subunit.</text>
</comment>
<comment type="pathway">
    <text evidence="1 2">Amino-acid degradation; L-histidine degradation into L-glutamate; N-formimidoyl-L-glutamate from L-histidine: step 2/3.</text>
</comment>
<comment type="subunit">
    <text evidence="2">Composed of at least two subunits.</text>
</comment>
<comment type="subcellular location">
    <subcellularLocation>
        <location evidence="1">Cytoplasm</location>
    </subcellularLocation>
</comment>
<comment type="similarity">
    <text evidence="1 5">Belongs to the urocanase family.</text>
</comment>
<reference key="1">
    <citation type="journal article" date="1995" name="Microbiology">
        <title>Cloning and sequencing of a 29 kb region of the Bacillus subtilis genome containing the hut and wapA loci.</title>
        <authorList>
            <person name="Yoshida K."/>
            <person name="Sano H."/>
            <person name="Seki S."/>
            <person name="Oda M."/>
            <person name="Fujimura M."/>
            <person name="Fujita Y."/>
        </authorList>
    </citation>
    <scope>NUCLEOTIDE SEQUENCE [GENOMIC DNA]</scope>
    <source>
        <strain>168 / BGSC1A1</strain>
    </source>
</reference>
<reference key="2">
    <citation type="journal article" date="1997" name="Nature">
        <title>The complete genome sequence of the Gram-positive bacterium Bacillus subtilis.</title>
        <authorList>
            <person name="Kunst F."/>
            <person name="Ogasawara N."/>
            <person name="Moszer I."/>
            <person name="Albertini A.M."/>
            <person name="Alloni G."/>
            <person name="Azevedo V."/>
            <person name="Bertero M.G."/>
            <person name="Bessieres P."/>
            <person name="Bolotin A."/>
            <person name="Borchert S."/>
            <person name="Borriss R."/>
            <person name="Boursier L."/>
            <person name="Brans A."/>
            <person name="Braun M."/>
            <person name="Brignell S.C."/>
            <person name="Bron S."/>
            <person name="Brouillet S."/>
            <person name="Bruschi C.V."/>
            <person name="Caldwell B."/>
            <person name="Capuano V."/>
            <person name="Carter N.M."/>
            <person name="Choi S.-K."/>
            <person name="Codani J.-J."/>
            <person name="Connerton I.F."/>
            <person name="Cummings N.J."/>
            <person name="Daniel R.A."/>
            <person name="Denizot F."/>
            <person name="Devine K.M."/>
            <person name="Duesterhoeft A."/>
            <person name="Ehrlich S.D."/>
            <person name="Emmerson P.T."/>
            <person name="Entian K.-D."/>
            <person name="Errington J."/>
            <person name="Fabret C."/>
            <person name="Ferrari E."/>
            <person name="Foulger D."/>
            <person name="Fritz C."/>
            <person name="Fujita M."/>
            <person name="Fujita Y."/>
            <person name="Fuma S."/>
            <person name="Galizzi A."/>
            <person name="Galleron N."/>
            <person name="Ghim S.-Y."/>
            <person name="Glaser P."/>
            <person name="Goffeau A."/>
            <person name="Golightly E.J."/>
            <person name="Grandi G."/>
            <person name="Guiseppi G."/>
            <person name="Guy B.J."/>
            <person name="Haga K."/>
            <person name="Haiech J."/>
            <person name="Harwood C.R."/>
            <person name="Henaut A."/>
            <person name="Hilbert H."/>
            <person name="Holsappel S."/>
            <person name="Hosono S."/>
            <person name="Hullo M.-F."/>
            <person name="Itaya M."/>
            <person name="Jones L.-M."/>
            <person name="Joris B."/>
            <person name="Karamata D."/>
            <person name="Kasahara Y."/>
            <person name="Klaerr-Blanchard M."/>
            <person name="Klein C."/>
            <person name="Kobayashi Y."/>
            <person name="Koetter P."/>
            <person name="Koningstein G."/>
            <person name="Krogh S."/>
            <person name="Kumano M."/>
            <person name="Kurita K."/>
            <person name="Lapidus A."/>
            <person name="Lardinois S."/>
            <person name="Lauber J."/>
            <person name="Lazarevic V."/>
            <person name="Lee S.-M."/>
            <person name="Levine A."/>
            <person name="Liu H."/>
            <person name="Masuda S."/>
            <person name="Mauel C."/>
            <person name="Medigue C."/>
            <person name="Medina N."/>
            <person name="Mellado R.P."/>
            <person name="Mizuno M."/>
            <person name="Moestl D."/>
            <person name="Nakai S."/>
            <person name="Noback M."/>
            <person name="Noone D."/>
            <person name="O'Reilly M."/>
            <person name="Ogawa K."/>
            <person name="Ogiwara A."/>
            <person name="Oudega B."/>
            <person name="Park S.-H."/>
            <person name="Parro V."/>
            <person name="Pohl T.M."/>
            <person name="Portetelle D."/>
            <person name="Porwollik S."/>
            <person name="Prescott A.M."/>
            <person name="Presecan E."/>
            <person name="Pujic P."/>
            <person name="Purnelle B."/>
            <person name="Rapoport G."/>
            <person name="Rey M."/>
            <person name="Reynolds S."/>
            <person name="Rieger M."/>
            <person name="Rivolta C."/>
            <person name="Rocha E."/>
            <person name="Roche B."/>
            <person name="Rose M."/>
            <person name="Sadaie Y."/>
            <person name="Sato T."/>
            <person name="Scanlan E."/>
            <person name="Schleich S."/>
            <person name="Schroeter R."/>
            <person name="Scoffone F."/>
            <person name="Sekiguchi J."/>
            <person name="Sekowska A."/>
            <person name="Seror S.J."/>
            <person name="Serror P."/>
            <person name="Shin B.-S."/>
            <person name="Soldo B."/>
            <person name="Sorokin A."/>
            <person name="Tacconi E."/>
            <person name="Takagi T."/>
            <person name="Takahashi H."/>
            <person name="Takemaru K."/>
            <person name="Takeuchi M."/>
            <person name="Tamakoshi A."/>
            <person name="Tanaka T."/>
            <person name="Terpstra P."/>
            <person name="Tognoni A."/>
            <person name="Tosato V."/>
            <person name="Uchiyama S."/>
            <person name="Vandenbol M."/>
            <person name="Vannier F."/>
            <person name="Vassarotti A."/>
            <person name="Viari A."/>
            <person name="Wambutt R."/>
            <person name="Wedler E."/>
            <person name="Wedler H."/>
            <person name="Weitzenegger T."/>
            <person name="Winters P."/>
            <person name="Wipat A."/>
            <person name="Yamamoto H."/>
            <person name="Yamane K."/>
            <person name="Yasumoto K."/>
            <person name="Yata K."/>
            <person name="Yoshida K."/>
            <person name="Yoshikawa H.-F."/>
            <person name="Zumstein E."/>
            <person name="Yoshikawa H."/>
            <person name="Danchin A."/>
        </authorList>
    </citation>
    <scope>NUCLEOTIDE SEQUENCE [LARGE SCALE GENOMIC DNA]</scope>
    <source>
        <strain>168</strain>
    </source>
</reference>
<reference key="3">
    <citation type="journal article" date="1988" name="J. Bacteriol.">
        <title>Cloning and nucleotide sequences of histidase and regulatory genes in the Bacillus subtilis hut operon and positive regulation of the operon.</title>
        <authorList>
            <person name="Oda M."/>
            <person name="Sugishita A."/>
            <person name="Furukawa K."/>
        </authorList>
    </citation>
    <scope>NUCLEOTIDE SEQUENCE [GENOMIC DNA] OF 1-240</scope>
</reference>
<reference key="4">
    <citation type="journal article" date="1970" name="J. Biol. Chem.">
        <title>Urocanase and N-formimino-L-glutamate formiminohydrolase of Bacillus subtilis, two enzymes of the histidine degradation pathway.</title>
        <authorList>
            <person name="Kaminskas E."/>
            <person name="Kimhi Y."/>
            <person name="Magasanik B."/>
        </authorList>
    </citation>
    <scope>FUNCTION</scope>
    <scope>CATALYTIC ACTIVITY</scope>
    <scope>PATHWAY</scope>
    <scope>SUBUNIT</scope>
</reference>
<reference evidence="6" key="5">
    <citation type="submission" date="2006-01" db="PDB data bank">
        <title>Crystal structure of urocanase from Bacillus subtilis.</title>
        <authorList>
            <person name="Yu Y.-M."/>
            <person name="Liang Y.-H."/>
            <person name="Su X.-D."/>
        </authorList>
    </citation>
    <scope>X-RAY CRYSTALLOGRAPHY (2.20 ANGSTROMS) IN COMPLEX WITH NAD</scope>
    <scope>COFACTOR</scope>
</reference>
<proteinExistence type="evidence at protein level"/>
<keyword id="KW-0002">3D-structure</keyword>
<keyword id="KW-0963">Cytoplasm</keyword>
<keyword id="KW-0369">Histidine metabolism</keyword>
<keyword id="KW-0456">Lyase</keyword>
<keyword id="KW-0520">NAD</keyword>
<keyword id="KW-1185">Reference proteome</keyword>
<protein>
    <recommendedName>
        <fullName evidence="1">Urocanate hydratase</fullName>
        <shortName evidence="1 4">Urocanase</shortName>
        <ecNumber evidence="1 2">4.2.1.49</ecNumber>
    </recommendedName>
    <alternativeName>
        <fullName evidence="1">Imidazolonepropionate hydrolase</fullName>
    </alternativeName>
</protein>
<sequence>MTDVKKSIRANRGTELECLGWEQEAVLRMLRNNLDPEVAEKPEDLIVYGGIGKAARDWDAFHAIEHSLKTLKNDETLLVQSGKPVGMFRTHPQAPRVLLANSVLVPKWADWEHFHELEKKGLMMYGQMTAGSWIYIGSQGILQGTYETFAELARQHFGGSLKGTLTLTAGLGGMGGAQPLSVTMNEGVVIAVEVDEKRIDKRIETKYCDRKTASIEEALAWAEEAKLAGKPLSIALLGNAAEVHHTLLNRGVKIDIVTDQTSAHDPLIGYVPEGYSLDEADRLRQDTPELYVRLAKQSMKKHVEAMLAFQQKGSIVFDYGNNIRQVAKDEGLENAFDFPGFVPAYIRPLFCEGKGPFRWAALSGDPADIYRTDALLKELFPTNKALHRWIDMAQEKVTFQGLPSRICWLGYGERKKMGLAINELVRTGELKAPVVIGRDHLDCGSVASPNRETEAMKDGSDAVGDWAVLNALVNTAAGASWVSFHHGGGVGMGYSLHAGMVAVADGSELADERLARVLTSDPGMGIIRHADAGYERAVEVAKEQDIIVPMQK</sequence>
<dbReference type="EC" id="4.2.1.49" evidence="1 2"/>
<dbReference type="EMBL" id="D31856">
    <property type="protein sequence ID" value="BAA06643.1"/>
    <property type="molecule type" value="Genomic_DNA"/>
</dbReference>
<dbReference type="EMBL" id="AL009126">
    <property type="protein sequence ID" value="CAB15972.1"/>
    <property type="molecule type" value="Genomic_DNA"/>
</dbReference>
<dbReference type="EMBL" id="M20659">
    <property type="status" value="NOT_ANNOTATED_CDS"/>
    <property type="molecule type" value="Genomic_DNA"/>
</dbReference>
<dbReference type="PIR" id="G69643">
    <property type="entry name" value="G69643"/>
</dbReference>
<dbReference type="RefSeq" id="NP_391815.1">
    <property type="nucleotide sequence ID" value="NC_000964.3"/>
</dbReference>
<dbReference type="RefSeq" id="WP_003243634.1">
    <property type="nucleotide sequence ID" value="NZ_OZ025638.1"/>
</dbReference>
<dbReference type="PDB" id="2FKN">
    <property type="method" value="X-ray"/>
    <property type="resolution" value="2.20 A"/>
    <property type="chains" value="A/B/C/D=1-552"/>
</dbReference>
<dbReference type="PDBsum" id="2FKN"/>
<dbReference type="SMR" id="P25503"/>
<dbReference type="FunCoup" id="P25503">
    <property type="interactions" value="113"/>
</dbReference>
<dbReference type="STRING" id="224308.BSU39360"/>
<dbReference type="PaxDb" id="224308-BSU39360"/>
<dbReference type="EnsemblBacteria" id="CAB15972">
    <property type="protein sequence ID" value="CAB15972"/>
    <property type="gene ID" value="BSU_39360"/>
</dbReference>
<dbReference type="GeneID" id="937542"/>
<dbReference type="KEGG" id="bsu:BSU39360"/>
<dbReference type="PATRIC" id="fig|224308.179.peg.4261"/>
<dbReference type="eggNOG" id="COG2987">
    <property type="taxonomic scope" value="Bacteria"/>
</dbReference>
<dbReference type="InParanoid" id="P25503"/>
<dbReference type="OrthoDB" id="9764874at2"/>
<dbReference type="PhylomeDB" id="P25503"/>
<dbReference type="BioCyc" id="BSUB:BSU39360-MONOMER"/>
<dbReference type="BioCyc" id="MetaCyc:HUTUBACSU-MONOMER"/>
<dbReference type="UniPathway" id="UPA00379">
    <property type="reaction ID" value="UER00550"/>
</dbReference>
<dbReference type="EvolutionaryTrace" id="P25503"/>
<dbReference type="Proteomes" id="UP000001570">
    <property type="component" value="Chromosome"/>
</dbReference>
<dbReference type="GO" id="GO:0005737">
    <property type="term" value="C:cytoplasm"/>
    <property type="evidence" value="ECO:0007669"/>
    <property type="project" value="UniProtKB-SubCell"/>
</dbReference>
<dbReference type="GO" id="GO:0016153">
    <property type="term" value="F:urocanate hydratase activity"/>
    <property type="evidence" value="ECO:0000318"/>
    <property type="project" value="GO_Central"/>
</dbReference>
<dbReference type="GO" id="GO:0006548">
    <property type="term" value="P:L-histidine catabolic process"/>
    <property type="evidence" value="ECO:0000318"/>
    <property type="project" value="GO_Central"/>
</dbReference>
<dbReference type="GO" id="GO:0019556">
    <property type="term" value="P:L-histidine catabolic process to glutamate and formamide"/>
    <property type="evidence" value="ECO:0007669"/>
    <property type="project" value="UniProtKB-UniPathway"/>
</dbReference>
<dbReference type="GO" id="GO:0019557">
    <property type="term" value="P:L-histidine catabolic process to glutamate and formate"/>
    <property type="evidence" value="ECO:0007669"/>
    <property type="project" value="UniProtKB-UniPathway"/>
</dbReference>
<dbReference type="FunFam" id="3.40.50.10730:FF:000001">
    <property type="entry name" value="Urocanate hydratase"/>
    <property type="match status" value="1"/>
</dbReference>
<dbReference type="Gene3D" id="3.40.50.10730">
    <property type="entry name" value="Urocanase like domains"/>
    <property type="match status" value="1"/>
</dbReference>
<dbReference type="Gene3D" id="3.40.1770.10">
    <property type="entry name" value="Urocanase superfamily"/>
    <property type="match status" value="1"/>
</dbReference>
<dbReference type="HAMAP" id="MF_00577">
    <property type="entry name" value="HutU"/>
    <property type="match status" value="1"/>
</dbReference>
<dbReference type="InterPro" id="IPR055351">
    <property type="entry name" value="Urocanase"/>
</dbReference>
<dbReference type="InterPro" id="IPR023637">
    <property type="entry name" value="Urocanase-like"/>
</dbReference>
<dbReference type="InterPro" id="IPR035401">
    <property type="entry name" value="Urocanase_C"/>
</dbReference>
<dbReference type="InterPro" id="IPR038364">
    <property type="entry name" value="Urocanase_central_sf"/>
</dbReference>
<dbReference type="InterPro" id="IPR023636">
    <property type="entry name" value="Urocanase_CS"/>
</dbReference>
<dbReference type="InterPro" id="IPR035400">
    <property type="entry name" value="Urocanase_N"/>
</dbReference>
<dbReference type="InterPro" id="IPR035085">
    <property type="entry name" value="Urocanase_Rossmann-like"/>
</dbReference>
<dbReference type="InterPro" id="IPR036190">
    <property type="entry name" value="Urocanase_sf"/>
</dbReference>
<dbReference type="NCBIfam" id="TIGR01228">
    <property type="entry name" value="hutU"/>
    <property type="match status" value="1"/>
</dbReference>
<dbReference type="NCBIfam" id="NF003820">
    <property type="entry name" value="PRK05414.1"/>
    <property type="match status" value="1"/>
</dbReference>
<dbReference type="PANTHER" id="PTHR12216">
    <property type="entry name" value="UROCANATE HYDRATASE"/>
    <property type="match status" value="1"/>
</dbReference>
<dbReference type="PANTHER" id="PTHR12216:SF4">
    <property type="entry name" value="UROCANATE HYDRATASE"/>
    <property type="match status" value="1"/>
</dbReference>
<dbReference type="Pfam" id="PF01175">
    <property type="entry name" value="Urocanase"/>
    <property type="match status" value="1"/>
</dbReference>
<dbReference type="Pfam" id="PF17392">
    <property type="entry name" value="Urocanase_C"/>
    <property type="match status" value="1"/>
</dbReference>
<dbReference type="Pfam" id="PF17391">
    <property type="entry name" value="Urocanase_N"/>
    <property type="match status" value="1"/>
</dbReference>
<dbReference type="PIRSF" id="PIRSF001423">
    <property type="entry name" value="Urocanate_hydrat"/>
    <property type="match status" value="1"/>
</dbReference>
<dbReference type="SUPFAM" id="SSF111326">
    <property type="entry name" value="Urocanase"/>
    <property type="match status" value="1"/>
</dbReference>
<dbReference type="PROSITE" id="PS01233">
    <property type="entry name" value="UROCANASE"/>
    <property type="match status" value="1"/>
</dbReference>
<gene>
    <name evidence="1" type="primary">hutU</name>
    <name type="ordered locus">BSU39360</name>
    <name type="ORF">EE57A</name>
</gene>
<evidence type="ECO:0000255" key="1">
    <source>
        <dbReference type="HAMAP-Rule" id="MF_00577"/>
    </source>
</evidence>
<evidence type="ECO:0000269" key="2">
    <source>
    </source>
</evidence>
<evidence type="ECO:0000269" key="3">
    <source ref="5"/>
</evidence>
<evidence type="ECO:0000303" key="4">
    <source>
    </source>
</evidence>
<evidence type="ECO:0000305" key="5"/>
<evidence type="ECO:0007744" key="6">
    <source>
        <dbReference type="PDB" id="2FKN"/>
    </source>
</evidence>
<evidence type="ECO:0007829" key="7">
    <source>
        <dbReference type="PDB" id="2FKN"/>
    </source>
</evidence>
<accession>P25503</accession>
<name>HUTU_BACSU</name>
<organism>
    <name type="scientific">Bacillus subtilis (strain 168)</name>
    <dbReference type="NCBI Taxonomy" id="224308"/>
    <lineage>
        <taxon>Bacteria</taxon>
        <taxon>Bacillati</taxon>
        <taxon>Bacillota</taxon>
        <taxon>Bacilli</taxon>
        <taxon>Bacillales</taxon>
        <taxon>Bacillaceae</taxon>
        <taxon>Bacillus</taxon>
    </lineage>
</organism>